<accession>A5IHV5</accession>
<reference key="1">
    <citation type="submission" date="2006-11" db="EMBL/GenBank/DDBJ databases">
        <title>Identification and characterization of a new conjugation/ type IVA secretion system (trb/tra) of L. pneumophila Corby localized on a mobile genomic island.</title>
        <authorList>
            <person name="Gloeckner G."/>
            <person name="Albert-Weissenberger C."/>
            <person name="Weinmann E."/>
            <person name="Jacobi S."/>
            <person name="Schunder E."/>
            <person name="Steinert M."/>
            <person name="Buchrieser C."/>
            <person name="Hacker J."/>
            <person name="Heuner K."/>
        </authorList>
    </citation>
    <scope>NUCLEOTIDE SEQUENCE [LARGE SCALE GENOMIC DNA]</scope>
    <source>
        <strain>Corby</strain>
    </source>
</reference>
<feature type="chain" id="PRO_1000067769" description="NADH-quinone oxidoreductase subunit I">
    <location>
        <begin position="1"/>
        <end position="166"/>
    </location>
</feature>
<feature type="domain" description="4Fe-4S ferredoxin-type 1" evidence="1">
    <location>
        <begin position="57"/>
        <end position="87"/>
    </location>
</feature>
<feature type="domain" description="4Fe-4S ferredoxin-type 2" evidence="1">
    <location>
        <begin position="97"/>
        <end position="126"/>
    </location>
</feature>
<feature type="binding site" evidence="1">
    <location>
        <position position="67"/>
    </location>
    <ligand>
        <name>[4Fe-4S] cluster</name>
        <dbReference type="ChEBI" id="CHEBI:49883"/>
        <label>1</label>
    </ligand>
</feature>
<feature type="binding site" evidence="1">
    <location>
        <position position="70"/>
    </location>
    <ligand>
        <name>[4Fe-4S] cluster</name>
        <dbReference type="ChEBI" id="CHEBI:49883"/>
        <label>1</label>
    </ligand>
</feature>
<feature type="binding site" evidence="1">
    <location>
        <position position="73"/>
    </location>
    <ligand>
        <name>[4Fe-4S] cluster</name>
        <dbReference type="ChEBI" id="CHEBI:49883"/>
        <label>1</label>
    </ligand>
</feature>
<feature type="binding site" evidence="1">
    <location>
        <position position="77"/>
    </location>
    <ligand>
        <name>[4Fe-4S] cluster</name>
        <dbReference type="ChEBI" id="CHEBI:49883"/>
        <label>2</label>
    </ligand>
</feature>
<feature type="binding site" evidence="1">
    <location>
        <position position="106"/>
    </location>
    <ligand>
        <name>[4Fe-4S] cluster</name>
        <dbReference type="ChEBI" id="CHEBI:49883"/>
        <label>2</label>
    </ligand>
</feature>
<feature type="binding site" evidence="1">
    <location>
        <position position="109"/>
    </location>
    <ligand>
        <name>[4Fe-4S] cluster</name>
        <dbReference type="ChEBI" id="CHEBI:49883"/>
        <label>2</label>
    </ligand>
</feature>
<feature type="binding site" evidence="1">
    <location>
        <position position="112"/>
    </location>
    <ligand>
        <name>[4Fe-4S] cluster</name>
        <dbReference type="ChEBI" id="CHEBI:49883"/>
        <label>2</label>
    </ligand>
</feature>
<feature type="binding site" evidence="1">
    <location>
        <position position="116"/>
    </location>
    <ligand>
        <name>[4Fe-4S] cluster</name>
        <dbReference type="ChEBI" id="CHEBI:49883"/>
        <label>1</label>
    </ligand>
</feature>
<comment type="function">
    <text evidence="1">NDH-1 shuttles electrons from NADH, via FMN and iron-sulfur (Fe-S) centers, to quinones in the respiratory chain. The immediate electron acceptor for the enzyme in this species is believed to be ubiquinone. Couples the redox reaction to proton translocation (for every two electrons transferred, four hydrogen ions are translocated across the cytoplasmic membrane), and thus conserves the redox energy in a proton gradient.</text>
</comment>
<comment type="catalytic activity">
    <reaction evidence="1">
        <text>a quinone + NADH + 5 H(+)(in) = a quinol + NAD(+) + 4 H(+)(out)</text>
        <dbReference type="Rhea" id="RHEA:57888"/>
        <dbReference type="ChEBI" id="CHEBI:15378"/>
        <dbReference type="ChEBI" id="CHEBI:24646"/>
        <dbReference type="ChEBI" id="CHEBI:57540"/>
        <dbReference type="ChEBI" id="CHEBI:57945"/>
        <dbReference type="ChEBI" id="CHEBI:132124"/>
    </reaction>
</comment>
<comment type="cofactor">
    <cofactor evidence="1">
        <name>[4Fe-4S] cluster</name>
        <dbReference type="ChEBI" id="CHEBI:49883"/>
    </cofactor>
    <text evidence="1">Binds 2 [4Fe-4S] clusters per subunit.</text>
</comment>
<comment type="subunit">
    <text evidence="1">NDH-1 is composed of 14 different subunits. Subunits NuoA, H, J, K, L, M, N constitute the membrane sector of the complex.</text>
</comment>
<comment type="subcellular location">
    <subcellularLocation>
        <location evidence="1">Cell inner membrane</location>
        <topology evidence="1">Peripheral membrane protein</topology>
    </subcellularLocation>
</comment>
<comment type="similarity">
    <text evidence="1">Belongs to the complex I 23 kDa subunit family.</text>
</comment>
<dbReference type="EC" id="7.1.1.-" evidence="1"/>
<dbReference type="EMBL" id="CP000675">
    <property type="protein sequence ID" value="ABQ56955.1"/>
    <property type="molecule type" value="Genomic_DNA"/>
</dbReference>
<dbReference type="RefSeq" id="WP_011947670.1">
    <property type="nucleotide sequence ID" value="NZ_JAPMSS010000004.1"/>
</dbReference>
<dbReference type="SMR" id="A5IHV5"/>
<dbReference type="KEGG" id="lpc:LPC_3067"/>
<dbReference type="HOGENOM" id="CLU_067218_5_1_6"/>
<dbReference type="GO" id="GO:0005886">
    <property type="term" value="C:plasma membrane"/>
    <property type="evidence" value="ECO:0007669"/>
    <property type="project" value="UniProtKB-SubCell"/>
</dbReference>
<dbReference type="GO" id="GO:0051539">
    <property type="term" value="F:4 iron, 4 sulfur cluster binding"/>
    <property type="evidence" value="ECO:0007669"/>
    <property type="project" value="UniProtKB-KW"/>
</dbReference>
<dbReference type="GO" id="GO:0005506">
    <property type="term" value="F:iron ion binding"/>
    <property type="evidence" value="ECO:0007669"/>
    <property type="project" value="UniProtKB-UniRule"/>
</dbReference>
<dbReference type="GO" id="GO:0050136">
    <property type="term" value="F:NADH:ubiquinone reductase (non-electrogenic) activity"/>
    <property type="evidence" value="ECO:0007669"/>
    <property type="project" value="UniProtKB-UniRule"/>
</dbReference>
<dbReference type="GO" id="GO:0048038">
    <property type="term" value="F:quinone binding"/>
    <property type="evidence" value="ECO:0007669"/>
    <property type="project" value="UniProtKB-KW"/>
</dbReference>
<dbReference type="GO" id="GO:0009060">
    <property type="term" value="P:aerobic respiration"/>
    <property type="evidence" value="ECO:0007669"/>
    <property type="project" value="TreeGrafter"/>
</dbReference>
<dbReference type="FunFam" id="3.30.70.3270:FF:000003">
    <property type="entry name" value="NADH-quinone oxidoreductase subunit I"/>
    <property type="match status" value="1"/>
</dbReference>
<dbReference type="Gene3D" id="3.30.70.3270">
    <property type="match status" value="1"/>
</dbReference>
<dbReference type="HAMAP" id="MF_01351">
    <property type="entry name" value="NDH1_NuoI"/>
    <property type="match status" value="1"/>
</dbReference>
<dbReference type="InterPro" id="IPR017896">
    <property type="entry name" value="4Fe4S_Fe-S-bd"/>
</dbReference>
<dbReference type="InterPro" id="IPR017900">
    <property type="entry name" value="4Fe4S_Fe_S_CS"/>
</dbReference>
<dbReference type="InterPro" id="IPR010226">
    <property type="entry name" value="NADH_quinone_OxRdtase_chainI"/>
</dbReference>
<dbReference type="NCBIfam" id="TIGR01971">
    <property type="entry name" value="NuoI"/>
    <property type="match status" value="1"/>
</dbReference>
<dbReference type="NCBIfam" id="NF004538">
    <property type="entry name" value="PRK05888.1-4"/>
    <property type="match status" value="1"/>
</dbReference>
<dbReference type="PANTHER" id="PTHR10849:SF20">
    <property type="entry name" value="NADH DEHYDROGENASE [UBIQUINONE] IRON-SULFUR PROTEIN 8, MITOCHONDRIAL"/>
    <property type="match status" value="1"/>
</dbReference>
<dbReference type="PANTHER" id="PTHR10849">
    <property type="entry name" value="NADH DEHYDROGENASE UBIQUINONE IRON-SULFUR PROTEIN 8, MITOCHONDRIAL"/>
    <property type="match status" value="1"/>
</dbReference>
<dbReference type="Pfam" id="PF12838">
    <property type="entry name" value="Fer4_7"/>
    <property type="match status" value="1"/>
</dbReference>
<dbReference type="SUPFAM" id="SSF46548">
    <property type="entry name" value="alpha-helical ferredoxin"/>
    <property type="match status" value="1"/>
</dbReference>
<dbReference type="PROSITE" id="PS00198">
    <property type="entry name" value="4FE4S_FER_1"/>
    <property type="match status" value="2"/>
</dbReference>
<dbReference type="PROSITE" id="PS51379">
    <property type="entry name" value="4FE4S_FER_2"/>
    <property type="match status" value="2"/>
</dbReference>
<proteinExistence type="inferred from homology"/>
<keyword id="KW-0004">4Fe-4S</keyword>
<keyword id="KW-0997">Cell inner membrane</keyword>
<keyword id="KW-1003">Cell membrane</keyword>
<keyword id="KW-0408">Iron</keyword>
<keyword id="KW-0411">Iron-sulfur</keyword>
<keyword id="KW-0472">Membrane</keyword>
<keyword id="KW-0479">Metal-binding</keyword>
<keyword id="KW-0520">NAD</keyword>
<keyword id="KW-0874">Quinone</keyword>
<keyword id="KW-0677">Repeat</keyword>
<keyword id="KW-1278">Translocase</keyword>
<keyword id="KW-0830">Ubiquinone</keyword>
<protein>
    <recommendedName>
        <fullName evidence="1">NADH-quinone oxidoreductase subunit I</fullName>
        <ecNumber evidence="1">7.1.1.-</ecNumber>
    </recommendedName>
    <alternativeName>
        <fullName evidence="1">NADH dehydrogenase I subunit I</fullName>
    </alternativeName>
    <alternativeName>
        <fullName evidence="1">NDH-1 subunit I</fullName>
    </alternativeName>
</protein>
<evidence type="ECO:0000255" key="1">
    <source>
        <dbReference type="HAMAP-Rule" id="MF_01351"/>
    </source>
</evidence>
<sequence>MKKVYHYIIHYVRTYLLLELLAGLWLTVKYFFRKKITVQFPEEQTPLSPRFRGLLALRRYPNGEERCIACKLCEAVCPALAITIESEQREDGSRRTTRYDIDMFKCINCGLCEESCPVDSIVVTPIHHYHISERGQNIMTKEKLLAVGDLMETQLAADRAADEKYR</sequence>
<organism>
    <name type="scientific">Legionella pneumophila (strain Corby)</name>
    <dbReference type="NCBI Taxonomy" id="400673"/>
    <lineage>
        <taxon>Bacteria</taxon>
        <taxon>Pseudomonadati</taxon>
        <taxon>Pseudomonadota</taxon>
        <taxon>Gammaproteobacteria</taxon>
        <taxon>Legionellales</taxon>
        <taxon>Legionellaceae</taxon>
        <taxon>Legionella</taxon>
    </lineage>
</organism>
<gene>
    <name evidence="1" type="primary">nuoI</name>
    <name type="ordered locus">LPC_3067</name>
</gene>
<name>NUOI_LEGPC</name>